<keyword id="KW-1185">Reference proteome</keyword>
<keyword id="KW-0687">Ribonucleoprotein</keyword>
<keyword id="KW-0689">Ribosomal protein</keyword>
<keyword id="KW-0694">RNA-binding</keyword>
<keyword id="KW-0699">rRNA-binding</keyword>
<reference key="1">
    <citation type="journal article" date="2010" name="J. Bacteriol.">
        <title>Genome sequence of the dioxin-mineralizing bacterium Sphingomonas wittichii RW1.</title>
        <authorList>
            <person name="Miller T.R."/>
            <person name="Delcher A.L."/>
            <person name="Salzberg S.L."/>
            <person name="Saunders E."/>
            <person name="Detter J.C."/>
            <person name="Halden R.U."/>
        </authorList>
    </citation>
    <scope>NUCLEOTIDE SEQUENCE [LARGE SCALE GENOMIC DNA]</scope>
    <source>
        <strain>DSM 6014 / CCUG 31198 / JCM 15750 / NBRC 105917 / EY 4224 / RW1</strain>
    </source>
</reference>
<protein>
    <recommendedName>
        <fullName evidence="1">Small ribosomal subunit protein uS19</fullName>
    </recommendedName>
    <alternativeName>
        <fullName evidence="2">30S ribosomal protein S19</fullName>
    </alternativeName>
</protein>
<feature type="chain" id="PRO_1000051129" description="Small ribosomal subunit protein uS19">
    <location>
        <begin position="1"/>
        <end position="90"/>
    </location>
</feature>
<comment type="function">
    <text evidence="1">Protein S19 forms a complex with S13 that binds strongly to the 16S ribosomal RNA.</text>
</comment>
<comment type="similarity">
    <text evidence="1">Belongs to the universal ribosomal protein uS19 family.</text>
</comment>
<proteinExistence type="inferred from homology"/>
<organism>
    <name type="scientific">Rhizorhabdus wittichii (strain DSM 6014 / CCUG 31198 / JCM 15750 / NBRC 105917 / EY 4224 / RW1)</name>
    <name type="common">Sphingomonas wittichii</name>
    <dbReference type="NCBI Taxonomy" id="392499"/>
    <lineage>
        <taxon>Bacteria</taxon>
        <taxon>Pseudomonadati</taxon>
        <taxon>Pseudomonadota</taxon>
        <taxon>Alphaproteobacteria</taxon>
        <taxon>Sphingomonadales</taxon>
        <taxon>Sphingomonadaceae</taxon>
        <taxon>Rhizorhabdus</taxon>
    </lineage>
</organism>
<accession>A5V5Z8</accession>
<gene>
    <name evidence="1" type="primary">rpsS</name>
    <name type="ordered locus">Swit_1349</name>
</gene>
<sequence>MARSIWKGPFVDLHLLRKAEGAQDSGARAPIKTWSRRSTILPQFVGLTFNVYNGRKFVPVSVSEEMVGHKLGEFAPTRYFPGHADKKGKR</sequence>
<evidence type="ECO:0000255" key="1">
    <source>
        <dbReference type="HAMAP-Rule" id="MF_00531"/>
    </source>
</evidence>
<evidence type="ECO:0000305" key="2"/>
<name>RS19_RHIWR</name>
<dbReference type="EMBL" id="CP000699">
    <property type="protein sequence ID" value="ABQ67714.1"/>
    <property type="molecule type" value="Genomic_DNA"/>
</dbReference>
<dbReference type="SMR" id="A5V5Z8"/>
<dbReference type="STRING" id="392499.Swit_1349"/>
<dbReference type="PaxDb" id="392499-Swit_1349"/>
<dbReference type="KEGG" id="swi:Swit_1349"/>
<dbReference type="eggNOG" id="COG0185">
    <property type="taxonomic scope" value="Bacteria"/>
</dbReference>
<dbReference type="HOGENOM" id="CLU_144911_0_1_5"/>
<dbReference type="OrthoDB" id="9797833at2"/>
<dbReference type="Proteomes" id="UP000001989">
    <property type="component" value="Chromosome"/>
</dbReference>
<dbReference type="GO" id="GO:0005737">
    <property type="term" value="C:cytoplasm"/>
    <property type="evidence" value="ECO:0007669"/>
    <property type="project" value="UniProtKB-ARBA"/>
</dbReference>
<dbReference type="GO" id="GO:0015935">
    <property type="term" value="C:small ribosomal subunit"/>
    <property type="evidence" value="ECO:0007669"/>
    <property type="project" value="InterPro"/>
</dbReference>
<dbReference type="GO" id="GO:0019843">
    <property type="term" value="F:rRNA binding"/>
    <property type="evidence" value="ECO:0007669"/>
    <property type="project" value="UniProtKB-UniRule"/>
</dbReference>
<dbReference type="GO" id="GO:0003735">
    <property type="term" value="F:structural constituent of ribosome"/>
    <property type="evidence" value="ECO:0007669"/>
    <property type="project" value="InterPro"/>
</dbReference>
<dbReference type="GO" id="GO:0000028">
    <property type="term" value="P:ribosomal small subunit assembly"/>
    <property type="evidence" value="ECO:0007669"/>
    <property type="project" value="TreeGrafter"/>
</dbReference>
<dbReference type="GO" id="GO:0006412">
    <property type="term" value="P:translation"/>
    <property type="evidence" value="ECO:0007669"/>
    <property type="project" value="UniProtKB-UniRule"/>
</dbReference>
<dbReference type="FunFam" id="3.30.860.10:FF:000001">
    <property type="entry name" value="30S ribosomal protein S19"/>
    <property type="match status" value="1"/>
</dbReference>
<dbReference type="Gene3D" id="3.30.860.10">
    <property type="entry name" value="30s Ribosomal Protein S19, Chain A"/>
    <property type="match status" value="1"/>
</dbReference>
<dbReference type="HAMAP" id="MF_00531">
    <property type="entry name" value="Ribosomal_uS19"/>
    <property type="match status" value="1"/>
</dbReference>
<dbReference type="InterPro" id="IPR002222">
    <property type="entry name" value="Ribosomal_uS19"/>
</dbReference>
<dbReference type="InterPro" id="IPR005732">
    <property type="entry name" value="Ribosomal_uS19_bac-type"/>
</dbReference>
<dbReference type="InterPro" id="IPR020934">
    <property type="entry name" value="Ribosomal_uS19_CS"/>
</dbReference>
<dbReference type="InterPro" id="IPR023575">
    <property type="entry name" value="Ribosomal_uS19_SF"/>
</dbReference>
<dbReference type="NCBIfam" id="TIGR01050">
    <property type="entry name" value="rpsS_bact"/>
    <property type="match status" value="1"/>
</dbReference>
<dbReference type="PANTHER" id="PTHR11880">
    <property type="entry name" value="RIBOSOMAL PROTEIN S19P FAMILY MEMBER"/>
    <property type="match status" value="1"/>
</dbReference>
<dbReference type="PANTHER" id="PTHR11880:SF8">
    <property type="entry name" value="SMALL RIBOSOMAL SUBUNIT PROTEIN US19M"/>
    <property type="match status" value="1"/>
</dbReference>
<dbReference type="Pfam" id="PF00203">
    <property type="entry name" value="Ribosomal_S19"/>
    <property type="match status" value="1"/>
</dbReference>
<dbReference type="PIRSF" id="PIRSF002144">
    <property type="entry name" value="Ribosomal_S19"/>
    <property type="match status" value="1"/>
</dbReference>
<dbReference type="PRINTS" id="PR00975">
    <property type="entry name" value="RIBOSOMALS19"/>
</dbReference>
<dbReference type="SUPFAM" id="SSF54570">
    <property type="entry name" value="Ribosomal protein S19"/>
    <property type="match status" value="1"/>
</dbReference>
<dbReference type="PROSITE" id="PS00323">
    <property type="entry name" value="RIBOSOMAL_S19"/>
    <property type="match status" value="1"/>
</dbReference>